<protein>
    <recommendedName>
        <fullName evidence="1">Neuraminidase</fullName>
        <ecNumber evidence="1">3.2.1.18</ecNumber>
    </recommendedName>
</protein>
<sequence length="471" mass="51800">MNPNQKLFALSGVAIALSVMNLLIGISNVGLNVSLHLKEKGTKQEENLTCTTITQNNTTVVENTYVNNTTIITKEPDLKAPSYLLLNKSLCSVEGWVVIAKDNAIRFGESEQIIVTREPYVSCDPSGCKMYALHQGTTIRNKHSNGTIHDRTAFRGLISTPLGTPPTVSNSDFICVGWSSTSCHDGVGRMTICIQGNNDNATATVYYNRRLTTTIKPWARNILRTQESECVCHNGTCAVVMTDGSASSQAYTKVMYFHKGLVIKEEPLKGSAKHIEECSCYGHNQKITCVCRDNWQGANRPIIEIDMNTLEHTSRYVCTGILTDTSRPGDKPSGDCSNPITGSPSAPGVKGFGFLNGDNTWLGRTISPRSRSGFEMLKIPNAGTDPNSRIAERQEIVDNNNWSGYSGSFIDYWDDDNECYNPCFYVELIRGRPEEAKYVWWTSNSLIALCGSPFPVGSGSFPDGAQIQYFS</sequence>
<dbReference type="EC" id="3.2.1.18" evidence="1"/>
<dbReference type="EMBL" id="CY014673">
    <property type="protein sequence ID" value="ABI84537.1"/>
    <property type="molecule type" value="Genomic_RNA"/>
</dbReference>
<dbReference type="EMBL" id="J02099">
    <property type="protein sequence ID" value="AAA43391.1"/>
    <property type="molecule type" value="Genomic_RNA"/>
</dbReference>
<dbReference type="EMBL" id="K01022">
    <property type="protein sequence ID" value="AAA43357.1"/>
    <property type="molecule type" value="Genomic_RNA"/>
</dbReference>
<dbReference type="SMR" id="P03480"/>
<dbReference type="CAZy" id="GH34">
    <property type="family name" value="Glycoside Hydrolase Family 34"/>
</dbReference>
<dbReference type="GlyCosmos" id="P03480">
    <property type="glycosylation" value="11 sites, No reported glycans"/>
</dbReference>
<dbReference type="PRO" id="PR:P03480"/>
<dbReference type="Proteomes" id="UP000008217">
    <property type="component" value="Genome"/>
</dbReference>
<dbReference type="GO" id="GO:0020002">
    <property type="term" value="C:host cell plasma membrane"/>
    <property type="evidence" value="ECO:0007669"/>
    <property type="project" value="UniProtKB-SubCell"/>
</dbReference>
<dbReference type="GO" id="GO:0016020">
    <property type="term" value="C:membrane"/>
    <property type="evidence" value="ECO:0007669"/>
    <property type="project" value="UniProtKB-UniRule"/>
</dbReference>
<dbReference type="GO" id="GO:0055036">
    <property type="term" value="C:virion membrane"/>
    <property type="evidence" value="ECO:0007669"/>
    <property type="project" value="UniProtKB-SubCell"/>
</dbReference>
<dbReference type="GO" id="GO:0004308">
    <property type="term" value="F:exo-alpha-sialidase activity"/>
    <property type="evidence" value="ECO:0007669"/>
    <property type="project" value="UniProtKB-UniRule"/>
</dbReference>
<dbReference type="GO" id="GO:0046872">
    <property type="term" value="F:metal ion binding"/>
    <property type="evidence" value="ECO:0007669"/>
    <property type="project" value="UniProtKB-UniRule"/>
</dbReference>
<dbReference type="GO" id="GO:0005975">
    <property type="term" value="P:carbohydrate metabolic process"/>
    <property type="evidence" value="ECO:0007669"/>
    <property type="project" value="InterPro"/>
</dbReference>
<dbReference type="GO" id="GO:0046761">
    <property type="term" value="P:viral budding from plasma membrane"/>
    <property type="evidence" value="ECO:0007669"/>
    <property type="project" value="UniProtKB-UniRule"/>
</dbReference>
<dbReference type="Gene3D" id="2.120.10.10">
    <property type="match status" value="1"/>
</dbReference>
<dbReference type="HAMAP" id="MF_04071">
    <property type="entry name" value="INFV_NRAM"/>
    <property type="match status" value="1"/>
</dbReference>
<dbReference type="InterPro" id="IPR001860">
    <property type="entry name" value="Glyco_hydro_34"/>
</dbReference>
<dbReference type="InterPro" id="IPR036278">
    <property type="entry name" value="Sialidase_sf"/>
</dbReference>
<dbReference type="Pfam" id="PF00064">
    <property type="entry name" value="Neur"/>
    <property type="match status" value="1"/>
</dbReference>
<dbReference type="SUPFAM" id="SSF50939">
    <property type="entry name" value="Sialidases"/>
    <property type="match status" value="1"/>
</dbReference>
<reference key="1">
    <citation type="journal article" date="2006" name="Science">
        <title>Large-scale sequence analysis of avian influenza isolates.</title>
        <authorList>
            <person name="Obenauer J.C."/>
            <person name="Denson J."/>
            <person name="Mehta P.K."/>
            <person name="Su X."/>
            <person name="Mukatira S."/>
            <person name="Finkelstein D.B."/>
            <person name="Xu X."/>
            <person name="Wang J."/>
            <person name="Ma J."/>
            <person name="Fan Y."/>
            <person name="Rakestraw K.M."/>
            <person name="Webster R.G."/>
            <person name="Hoffmann E."/>
            <person name="Krauss S."/>
            <person name="Zheng J."/>
            <person name="Zhang Z."/>
            <person name="Naeve C.W."/>
        </authorList>
    </citation>
    <scope>NUCLEOTIDE SEQUENCE [GENOMIC RNA]</scope>
</reference>
<reference key="2">
    <citation type="journal article" date="1982" name="Biochemistry">
        <title>Variation in the membrane-insertion and 'stalk' sequences in eight subtypes of influenza type A virus neuraminidase.</title>
        <authorList>
            <person name="Blok J."/>
            <person name="Air G.M."/>
        </authorList>
    </citation>
    <scope>NUCLEOTIDE SEQUENCE [GENOMIC RNA] OF 1-96</scope>
</reference>
<reference key="3">
    <citation type="book" date="1982" name="Genetic variation among influenza viruses">
        <title>Sequence variation at the 3' end of the neuraminidase gene from 39 influenza type A viruses.</title>
        <editorList>
            <person name="Nayak D."/>
            <person name="Fox C.F."/>
        </editorList>
        <authorList>
            <person name="Blok J."/>
        </authorList>
    </citation>
    <scope>NUCLEOTIDE SEQUENCE [GENOMIC RNA] OF 1-96</scope>
</reference>
<reference key="4">
    <citation type="journal article" date="2004" name="Virus Res.">
        <title>Assembly and budding of influenza virus.</title>
        <authorList>
            <person name="Nayak D.P."/>
            <person name="Hui E.K."/>
            <person name="Barman S."/>
        </authorList>
    </citation>
    <scope>REVIEW</scope>
</reference>
<reference key="5">
    <citation type="journal article" date="2005" name="N. Engl. J. Med.">
        <title>Neuraminidase inhibitors for influenza.</title>
        <authorList>
            <person name="Moscona A."/>
        </authorList>
    </citation>
    <scope>REVIEW</scope>
</reference>
<reference key="6">
    <citation type="journal article" date="2005" name="Biol. Pharm. Bull.">
        <title>Sialobiology of influenza: molecular mechanism of host range variation of influenza viruses.</title>
        <authorList>
            <person name="Suzuki Y."/>
        </authorList>
    </citation>
    <scope>REVIEW</scope>
</reference>
<gene>
    <name evidence="1" type="primary">NA</name>
</gene>
<name>NRAM_I49A1</name>
<organism>
    <name type="scientific">Influenza A virus (strain A/Duck/Germany/1949 H10N7)</name>
    <dbReference type="NCBI Taxonomy" id="382838"/>
    <lineage>
        <taxon>Viruses</taxon>
        <taxon>Riboviria</taxon>
        <taxon>Orthornavirae</taxon>
        <taxon>Negarnaviricota</taxon>
        <taxon>Polyploviricotina</taxon>
        <taxon>Insthoviricetes</taxon>
        <taxon>Articulavirales</taxon>
        <taxon>Orthomyxoviridae</taxon>
        <taxon>Alphainfluenzavirus</taxon>
        <taxon>Alphainfluenzavirus influenzae</taxon>
        <taxon>Influenza A virus</taxon>
    </lineage>
</organism>
<comment type="function">
    <text evidence="1">Catalyzes the removal of terminal sialic acid residues from viral and cellular glycoconjugates. Cleaves off the terminal sialic acids on the glycosylated HA during virus budding to facilitate virus release. Additionally helps virus spread through the circulation by further removing sialic acids from the cell surface. These cleavages prevent self-aggregation and ensure the efficient spread of the progeny virus from cell to cell. Otherwise, infection would be limited to one round of replication. Described as a receptor-destroying enzyme because it cleaves a terminal sialic acid from the cellular receptors. May facilitate viral invasion of the upper airways by cleaving the sialic acid moieties on the mucin of the airway epithelial cells. Likely to plays a role in the budding process through its association with lipid rafts during intracellular transport. May additionally display a raft-association independent effect on budding. Plays a role in the determination of host range restriction on replication and virulence. Sialidase activity in late endosome/lysosome traffic seems to enhance virus replication.</text>
</comment>
<comment type="catalytic activity">
    <reaction evidence="1">
        <text>Hydrolysis of alpha-(2-&gt;3)-, alpha-(2-&gt;6)-, alpha-(2-&gt;8)- glycosidic linkages of terminal sialic acid residues in oligosaccharides, glycoproteins, glycolipids, colominic acid and synthetic substrates.</text>
        <dbReference type="EC" id="3.2.1.18"/>
    </reaction>
</comment>
<comment type="cofactor">
    <cofactor evidence="1">
        <name>Ca(2+)</name>
        <dbReference type="ChEBI" id="CHEBI:29108"/>
    </cofactor>
</comment>
<comment type="activity regulation">
    <text evidence="1">Inhibited by the neuraminidase inhibitors zanamivir (Relenza) and oseltamivir (Tamiflu). These drugs interfere with the release of progeny virus from infected cells and are effective against all influenza strains. Resistance to neuraminidase inhibitors is quite rare.</text>
</comment>
<comment type="subunit">
    <text evidence="1">Homotetramer.</text>
</comment>
<comment type="subcellular location">
    <subcellularLocation>
        <location evidence="1">Virion membrane</location>
    </subcellularLocation>
    <subcellularLocation>
        <location evidence="1">Host apical cell membrane</location>
        <topology evidence="1">Single-pass type II membrane protein</topology>
    </subcellularLocation>
    <text evidence="1">Preferentially accumulates at the apical plasma membrane in infected polarized epithelial cells, which is the virus assembly site. Uses lipid rafts for cell surface transport and apical sorting. In the virion, forms a mushroom-shaped spike on the surface of the membrane.</text>
</comment>
<comment type="domain">
    <text evidence="1">Intact N-terminus is essential for virion morphogenesis. Possesses two apical sorting signals, one in the ectodomain, which is likely to be a glycan, and the other in the transmembrane domain. The transmembrane domain also plays a role in lipid raft association.</text>
</comment>
<comment type="PTM">
    <text evidence="1">N-glycosylated.</text>
</comment>
<comment type="miscellaneous">
    <text>The influenza A genome consist of 8 RNA segments. Genetic variation of hemagglutinin and/or neuraminidase genes results in the emergence of new influenza strains. The mechanism of variation can be the result of point mutations or the result of genetic reassortment between segments of two different strains.</text>
</comment>
<comment type="similarity">
    <text evidence="1">Belongs to the glycosyl hydrolase 34 family.</text>
</comment>
<evidence type="ECO:0000255" key="1">
    <source>
        <dbReference type="HAMAP-Rule" id="MF_04071"/>
    </source>
</evidence>
<accession>P03480</accession>
<accession>Q0A445</accession>
<accession>Q6LEJ3</accession>
<organismHost>
    <name type="scientific">Aves</name>
    <dbReference type="NCBI Taxonomy" id="8782"/>
</organismHost>
<proteinExistence type="inferred from homology"/>
<keyword id="KW-0106">Calcium</keyword>
<keyword id="KW-1015">Disulfide bond</keyword>
<keyword id="KW-0325">Glycoprotein</keyword>
<keyword id="KW-0326">Glycosidase</keyword>
<keyword id="KW-1032">Host cell membrane</keyword>
<keyword id="KW-1043">Host membrane</keyword>
<keyword id="KW-0378">Hydrolase</keyword>
<keyword id="KW-0472">Membrane</keyword>
<keyword id="KW-0479">Metal-binding</keyword>
<keyword id="KW-0735">Signal-anchor</keyword>
<keyword id="KW-0812">Transmembrane</keyword>
<keyword id="KW-1133">Transmembrane helix</keyword>
<keyword id="KW-0946">Virion</keyword>
<feature type="chain" id="PRO_0000078685" description="Neuraminidase">
    <location>
        <begin position="1"/>
        <end position="471"/>
    </location>
</feature>
<feature type="topological domain" description="Intravirion" evidence="1">
    <location>
        <begin position="1"/>
        <end position="6"/>
    </location>
</feature>
<feature type="transmembrane region" description="Helical" evidence="1">
    <location>
        <begin position="7"/>
        <end position="27"/>
    </location>
</feature>
<feature type="topological domain" description="Virion surface" evidence="1">
    <location>
        <begin position="28"/>
        <end position="471"/>
    </location>
</feature>
<feature type="region of interest" description="Involved in apical transport and lipid raft association" evidence="1">
    <location>
        <begin position="11"/>
        <end position="33"/>
    </location>
</feature>
<feature type="region of interest" description="Hypervariable stalk region" evidence="1">
    <location>
        <begin position="36"/>
        <end position="87"/>
    </location>
</feature>
<feature type="region of interest" description="Head of neuraminidase" evidence="1">
    <location>
        <begin position="90"/>
        <end position="471"/>
    </location>
</feature>
<feature type="active site" description="Proton donor/acceptor" evidence="1">
    <location>
        <position position="150"/>
    </location>
</feature>
<feature type="active site" description="Nucleophile" evidence="1">
    <location>
        <position position="405"/>
    </location>
</feature>
<feature type="binding site" evidence="1">
    <location>
        <position position="117"/>
    </location>
    <ligand>
        <name>substrate</name>
    </ligand>
</feature>
<feature type="binding site" evidence="1">
    <location>
        <position position="151"/>
    </location>
    <ligand>
        <name>substrate</name>
    </ligand>
</feature>
<feature type="binding site" evidence="1">
    <location>
        <begin position="276"/>
        <end position="277"/>
    </location>
    <ligand>
        <name>substrate</name>
    </ligand>
</feature>
<feature type="binding site" evidence="1">
    <location>
        <position position="292"/>
    </location>
    <ligand>
        <name>substrate</name>
    </ligand>
</feature>
<feature type="binding site" evidence="1">
    <location>
        <position position="293"/>
    </location>
    <ligand>
        <name>Ca(2+)</name>
        <dbReference type="ChEBI" id="CHEBI:29108"/>
    </ligand>
</feature>
<feature type="binding site" evidence="1">
    <location>
        <position position="297"/>
    </location>
    <ligand>
        <name>Ca(2+)</name>
        <dbReference type="ChEBI" id="CHEBI:29108"/>
    </ligand>
</feature>
<feature type="binding site" evidence="1">
    <location>
        <position position="324"/>
    </location>
    <ligand>
        <name>Ca(2+)</name>
        <dbReference type="ChEBI" id="CHEBI:29108"/>
    </ligand>
</feature>
<feature type="binding site" evidence="1">
    <location>
        <position position="371"/>
    </location>
    <ligand>
        <name>substrate</name>
    </ligand>
</feature>
<feature type="glycosylation site" description="N-linked (GlcNAc...) asparagine; by host" evidence="1">
    <location>
        <position position="32"/>
    </location>
</feature>
<feature type="glycosylation site" description="N-linked (GlcNAc...) asparagine; by host" evidence="1">
    <location>
        <position position="47"/>
    </location>
</feature>
<feature type="glycosylation site" description="N-linked (GlcNAc...) asparagine; by host" evidence="1">
    <location>
        <position position="56"/>
    </location>
</feature>
<feature type="glycosylation site" description="N-linked (GlcNAc...) asparagine; by host" evidence="1">
    <location>
        <position position="57"/>
    </location>
</feature>
<feature type="glycosylation site" description="N-linked (GlcNAc...) asparagine; by host" evidence="1">
    <location>
        <position position="67"/>
    </location>
</feature>
<feature type="glycosylation site" description="N-linked (GlcNAc...) asparagine; by host" evidence="1">
    <location>
        <position position="68"/>
    </location>
</feature>
<feature type="glycosylation site" description="N-linked (GlcNAc...) asparagine; by host" evidence="1">
    <location>
        <position position="87"/>
    </location>
</feature>
<feature type="glycosylation site" description="N-linked (GlcNAc...) asparagine; by host" evidence="1">
    <location>
        <position position="145"/>
    </location>
</feature>
<feature type="glycosylation site" description="N-linked (GlcNAc...) asparagine; by host" evidence="1">
    <location>
        <position position="200"/>
    </location>
</feature>
<feature type="glycosylation site" description="N-linked (GlcNAc...) asparagine; by host" evidence="1">
    <location>
        <position position="234"/>
    </location>
</feature>
<feature type="glycosylation site" description="N-linked (GlcNAc...) asparagine; by host" evidence="1">
    <location>
        <position position="401"/>
    </location>
</feature>
<feature type="disulfide bond" evidence="1">
    <location>
        <begin position="91"/>
        <end position="419"/>
    </location>
</feature>
<feature type="disulfide bond" evidence="1">
    <location>
        <begin position="123"/>
        <end position="128"/>
    </location>
</feature>
<feature type="disulfide bond" evidence="1">
    <location>
        <begin position="183"/>
        <end position="230"/>
    </location>
</feature>
<feature type="disulfide bond" evidence="1">
    <location>
        <begin position="232"/>
        <end position="237"/>
    </location>
</feature>
<feature type="disulfide bond" evidence="1">
    <location>
        <begin position="278"/>
        <end position="291"/>
    </location>
</feature>
<feature type="disulfide bond" evidence="1">
    <location>
        <begin position="280"/>
        <end position="289"/>
    </location>
</feature>
<feature type="disulfide bond" evidence="1">
    <location>
        <begin position="318"/>
        <end position="336"/>
    </location>
</feature>
<feature type="disulfide bond" evidence="1">
    <location>
        <begin position="423"/>
        <end position="450"/>
    </location>
</feature>
<feature type="sequence conflict" description="In Ref. 2; AAA43391 and 3; AAA43357." ref="2 3">
    <original>K</original>
    <variation>H</variation>
    <location>
        <position position="88"/>
    </location>
</feature>